<proteinExistence type="evidence at protein level"/>
<organism>
    <name type="scientific">Mus musculus</name>
    <name type="common">Mouse</name>
    <dbReference type="NCBI Taxonomy" id="10090"/>
    <lineage>
        <taxon>Eukaryota</taxon>
        <taxon>Metazoa</taxon>
        <taxon>Chordata</taxon>
        <taxon>Craniata</taxon>
        <taxon>Vertebrata</taxon>
        <taxon>Euteleostomi</taxon>
        <taxon>Mammalia</taxon>
        <taxon>Eutheria</taxon>
        <taxon>Euarchontoglires</taxon>
        <taxon>Glires</taxon>
        <taxon>Rodentia</taxon>
        <taxon>Myomorpha</taxon>
        <taxon>Muroidea</taxon>
        <taxon>Muridae</taxon>
        <taxon>Murinae</taxon>
        <taxon>Mus</taxon>
        <taxon>Mus</taxon>
    </lineage>
</organism>
<dbReference type="EMBL" id="AJ307670">
    <property type="protein sequence ID" value="CAC38111.1"/>
    <property type="molecule type" value="Genomic_DNA"/>
</dbReference>
<dbReference type="EMBL" id="AJ307670">
    <property type="protein sequence ID" value="CAC38112.1"/>
    <property type="molecule type" value="Genomic_DNA"/>
</dbReference>
<dbReference type="EMBL" id="BC030391">
    <property type="protein sequence ID" value="AAH30391.1"/>
    <property type="molecule type" value="mRNA"/>
</dbReference>
<dbReference type="EMBL" id="BC032266">
    <property type="protein sequence ID" value="AAH32266.1"/>
    <property type="status" value="ALT_INIT"/>
    <property type="molecule type" value="mRNA"/>
</dbReference>
<dbReference type="EMBL" id="BC051034">
    <property type="protein sequence ID" value="AAH51034.1"/>
    <property type="molecule type" value="mRNA"/>
</dbReference>
<dbReference type="CCDS" id="CCDS21734.1">
    <molecule id="Q924W7-1"/>
</dbReference>
<dbReference type="CCDS" id="CCDS21735.1">
    <molecule id="Q924W7-2"/>
</dbReference>
<dbReference type="RefSeq" id="NP_001001326.1">
    <molecule id="Q924W7-1"/>
    <property type="nucleotide sequence ID" value="NM_001001326.1"/>
</dbReference>
<dbReference type="RefSeq" id="NP_084087.2">
    <molecule id="Q924W7-2"/>
    <property type="nucleotide sequence ID" value="NM_029811.2"/>
</dbReference>
<dbReference type="RefSeq" id="XP_006508383.1">
    <molecule id="Q924W7-1"/>
    <property type="nucleotide sequence ID" value="XM_006508320.5"/>
</dbReference>
<dbReference type="RefSeq" id="XP_030098948.1">
    <molecule id="Q924W7-1"/>
    <property type="nucleotide sequence ID" value="XM_030243088.2"/>
</dbReference>
<dbReference type="RefSeq" id="XP_030098949.1">
    <molecule id="Q924W7-1"/>
    <property type="nucleotide sequence ID" value="XM_030243089.2"/>
</dbReference>
<dbReference type="SMR" id="Q924W7"/>
<dbReference type="BioGRID" id="218424">
    <property type="interactions" value="6"/>
</dbReference>
<dbReference type="FunCoup" id="Q924W7">
    <property type="interactions" value="70"/>
</dbReference>
<dbReference type="IntAct" id="Q924W7">
    <property type="interactions" value="1"/>
</dbReference>
<dbReference type="MINT" id="Q924W7"/>
<dbReference type="STRING" id="10090.ENSMUSP00000077067"/>
<dbReference type="GlyGen" id="Q924W7">
    <property type="glycosylation" value="3 sites, 1 O-linked glycan (1 site)"/>
</dbReference>
<dbReference type="iPTMnet" id="Q924W7"/>
<dbReference type="PhosphoSitePlus" id="Q924W7"/>
<dbReference type="jPOST" id="Q924W7"/>
<dbReference type="PaxDb" id="10090-ENSMUSP00000077067"/>
<dbReference type="ProteomicsDB" id="254573">
    <molecule id="Q924W7-1"/>
</dbReference>
<dbReference type="ProteomicsDB" id="254574">
    <molecule id="Q924W7-2"/>
</dbReference>
<dbReference type="ProteomicsDB" id="254575">
    <molecule id="Q924W7-3"/>
</dbReference>
<dbReference type="Pumba" id="Q924W7"/>
<dbReference type="Antibodypedia" id="24131">
    <property type="antibodies" value="210 antibodies from 30 providers"/>
</dbReference>
<dbReference type="DNASU" id="76954"/>
<dbReference type="Ensembl" id="ENSMUST00000077909.9">
    <molecule id="Q924W7-1"/>
    <property type="protein sequence ID" value="ENSMUSP00000077067.2"/>
    <property type="gene ID" value="ENSMUSG00000031024.14"/>
</dbReference>
<dbReference type="Ensembl" id="ENSMUST00000079282.8">
    <molecule id="Q924W7-1"/>
    <property type="protein sequence ID" value="ENSMUSP00000078264.2"/>
    <property type="gene ID" value="ENSMUSG00000031024.14"/>
</dbReference>
<dbReference type="Ensembl" id="ENSMUST00000084738.5">
    <molecule id="Q924W7-2"/>
    <property type="protein sequence ID" value="ENSMUSP00000081789.4"/>
    <property type="gene ID" value="ENSMUSG00000031024.14"/>
</dbReference>
<dbReference type="Ensembl" id="ENSMUST00000168005.8">
    <molecule id="Q924W7-2"/>
    <property type="protein sequence ID" value="ENSMUSP00000130119.2"/>
    <property type="gene ID" value="ENSMUSG00000031024.14"/>
</dbReference>
<dbReference type="GeneID" id="76954"/>
<dbReference type="KEGG" id="mmu:76954"/>
<dbReference type="UCSC" id="uc009jds.1">
    <molecule id="Q924W7-1"/>
    <property type="organism name" value="mouse"/>
</dbReference>
<dbReference type="UCSC" id="uc009jdv.1">
    <molecule id="Q924W7-2"/>
    <property type="organism name" value="mouse"/>
</dbReference>
<dbReference type="AGR" id="MGI:108517"/>
<dbReference type="CTD" id="6764"/>
<dbReference type="MGI" id="MGI:108517">
    <property type="gene designation" value="Dennd2b"/>
</dbReference>
<dbReference type="VEuPathDB" id="HostDB:ENSMUSG00000031024"/>
<dbReference type="eggNOG" id="KOG3569">
    <property type="taxonomic scope" value="Eukaryota"/>
</dbReference>
<dbReference type="GeneTree" id="ENSGT00950000182931"/>
<dbReference type="HOGENOM" id="CLU_008960_0_0_1"/>
<dbReference type="InParanoid" id="Q924W7"/>
<dbReference type="OMA" id="MDKRDAG"/>
<dbReference type="OrthoDB" id="10266080at2759"/>
<dbReference type="PhylomeDB" id="Q924W7"/>
<dbReference type="TreeFam" id="TF320336"/>
<dbReference type="Reactome" id="R-MMU-8876198">
    <property type="pathway name" value="RAB GEFs exchange GTP for GDP on RABs"/>
</dbReference>
<dbReference type="BioGRID-ORCS" id="76954">
    <property type="hits" value="1 hit in 78 CRISPR screens"/>
</dbReference>
<dbReference type="ChiTaRS" id="St5">
    <property type="organism name" value="mouse"/>
</dbReference>
<dbReference type="PRO" id="PR:Q924W7"/>
<dbReference type="Proteomes" id="UP000000589">
    <property type="component" value="Chromosome 7"/>
</dbReference>
<dbReference type="RNAct" id="Q924W7">
    <property type="molecule type" value="protein"/>
</dbReference>
<dbReference type="Bgee" id="ENSMUSG00000031024">
    <property type="expression patterns" value="Expressed in ascending aorta and 232 other cell types or tissues"/>
</dbReference>
<dbReference type="ExpressionAtlas" id="Q924W7">
    <property type="expression patterns" value="baseline and differential"/>
</dbReference>
<dbReference type="GO" id="GO:0005938">
    <property type="term" value="C:cell cortex"/>
    <property type="evidence" value="ECO:0007669"/>
    <property type="project" value="UniProtKB-SubCell"/>
</dbReference>
<dbReference type="GO" id="GO:0005886">
    <property type="term" value="C:plasma membrane"/>
    <property type="evidence" value="ECO:0007669"/>
    <property type="project" value="UniProtKB-SubCell"/>
</dbReference>
<dbReference type="GO" id="GO:0055037">
    <property type="term" value="C:recycling endosome"/>
    <property type="evidence" value="ECO:0007669"/>
    <property type="project" value="UniProtKB-SubCell"/>
</dbReference>
<dbReference type="GO" id="GO:0005085">
    <property type="term" value="F:guanyl-nucleotide exchange factor activity"/>
    <property type="evidence" value="ECO:0000250"/>
    <property type="project" value="UniProtKB"/>
</dbReference>
<dbReference type="GO" id="GO:0070374">
    <property type="term" value="P:positive regulation of ERK1 and ERK2 cascade"/>
    <property type="evidence" value="ECO:0000266"/>
    <property type="project" value="MGI"/>
</dbReference>
<dbReference type="FunFam" id="3.30.450.200:FF:000001">
    <property type="entry name" value="DENN domain-containing protein 2A isoform X1"/>
    <property type="match status" value="1"/>
</dbReference>
<dbReference type="FunFam" id="3.40.50.11500:FF:000004">
    <property type="entry name" value="DENN domain-containing protein 2C isoform X1"/>
    <property type="match status" value="1"/>
</dbReference>
<dbReference type="Gene3D" id="3.30.450.200">
    <property type="match status" value="1"/>
</dbReference>
<dbReference type="Gene3D" id="3.40.50.11500">
    <property type="match status" value="1"/>
</dbReference>
<dbReference type="InterPro" id="IPR001194">
    <property type="entry name" value="cDENN_dom"/>
</dbReference>
<dbReference type="InterPro" id="IPR005112">
    <property type="entry name" value="dDENN_dom"/>
</dbReference>
<dbReference type="InterPro" id="IPR043153">
    <property type="entry name" value="DENN_C"/>
</dbReference>
<dbReference type="InterPro" id="IPR051942">
    <property type="entry name" value="DENN_domain_containing_2"/>
</dbReference>
<dbReference type="InterPro" id="IPR037516">
    <property type="entry name" value="Tripartite_DENN"/>
</dbReference>
<dbReference type="InterPro" id="IPR005113">
    <property type="entry name" value="uDENN_dom"/>
</dbReference>
<dbReference type="PANTHER" id="PTHR15288">
    <property type="entry name" value="DENN DOMAIN-CONTAINING PROTEIN 2"/>
    <property type="match status" value="1"/>
</dbReference>
<dbReference type="PANTHER" id="PTHR15288:SF5">
    <property type="entry name" value="DENN DOMAIN-CONTAINING PROTEIN 2B"/>
    <property type="match status" value="1"/>
</dbReference>
<dbReference type="Pfam" id="PF03455">
    <property type="entry name" value="dDENN"/>
    <property type="match status" value="1"/>
</dbReference>
<dbReference type="Pfam" id="PF02141">
    <property type="entry name" value="DENN"/>
    <property type="match status" value="1"/>
</dbReference>
<dbReference type="Pfam" id="PF03456">
    <property type="entry name" value="uDENN"/>
    <property type="match status" value="1"/>
</dbReference>
<dbReference type="SMART" id="SM00801">
    <property type="entry name" value="dDENN"/>
    <property type="match status" value="1"/>
</dbReference>
<dbReference type="SMART" id="SM00799">
    <property type="entry name" value="DENN"/>
    <property type="match status" value="1"/>
</dbReference>
<dbReference type="SMART" id="SM00800">
    <property type="entry name" value="uDENN"/>
    <property type="match status" value="1"/>
</dbReference>
<dbReference type="PROSITE" id="PS50211">
    <property type="entry name" value="DENN"/>
    <property type="match status" value="1"/>
</dbReference>
<feature type="chain" id="PRO_0000247449" description="DENN domain-containing protein 2B">
    <location>
        <begin position="1"/>
        <end position="1134"/>
    </location>
</feature>
<feature type="domain" description="uDENN" evidence="2">
    <location>
        <begin position="695"/>
        <end position="843"/>
    </location>
</feature>
<feature type="domain" description="cDENN" evidence="2">
    <location>
        <begin position="865"/>
        <end position="998"/>
    </location>
</feature>
<feature type="domain" description="dDENN" evidence="2">
    <location>
        <begin position="1000"/>
        <end position="1093"/>
    </location>
</feature>
<feature type="region of interest" description="Disordered" evidence="3">
    <location>
        <begin position="1"/>
        <end position="90"/>
    </location>
</feature>
<feature type="region of interest" description="Disordered" evidence="3">
    <location>
        <begin position="233"/>
        <end position="273"/>
    </location>
</feature>
<feature type="region of interest" description="Disordered" evidence="3">
    <location>
        <begin position="289"/>
        <end position="571"/>
    </location>
</feature>
<feature type="region of interest" description="Disordered" evidence="3">
    <location>
        <begin position="633"/>
        <end position="658"/>
    </location>
</feature>
<feature type="compositionally biased region" description="Polar residues" evidence="3">
    <location>
        <begin position="1"/>
        <end position="13"/>
    </location>
</feature>
<feature type="compositionally biased region" description="Pro residues" evidence="3">
    <location>
        <begin position="32"/>
        <end position="43"/>
    </location>
</feature>
<feature type="compositionally biased region" description="Basic and acidic residues" evidence="3">
    <location>
        <begin position="249"/>
        <end position="259"/>
    </location>
</feature>
<feature type="compositionally biased region" description="Low complexity" evidence="3">
    <location>
        <begin position="315"/>
        <end position="348"/>
    </location>
</feature>
<feature type="compositionally biased region" description="Pro residues" evidence="3">
    <location>
        <begin position="370"/>
        <end position="385"/>
    </location>
</feature>
<feature type="compositionally biased region" description="Basic and acidic residues" evidence="3">
    <location>
        <begin position="389"/>
        <end position="399"/>
    </location>
</feature>
<feature type="compositionally biased region" description="Pro residues" evidence="3">
    <location>
        <begin position="406"/>
        <end position="428"/>
    </location>
</feature>
<feature type="compositionally biased region" description="Basic residues" evidence="3">
    <location>
        <begin position="429"/>
        <end position="443"/>
    </location>
</feature>
<feature type="compositionally biased region" description="Polar residues" evidence="3">
    <location>
        <begin position="453"/>
        <end position="478"/>
    </location>
</feature>
<feature type="compositionally biased region" description="Polar residues" evidence="3">
    <location>
        <begin position="511"/>
        <end position="521"/>
    </location>
</feature>
<feature type="compositionally biased region" description="Polar residues" evidence="3">
    <location>
        <begin position="542"/>
        <end position="555"/>
    </location>
</feature>
<feature type="compositionally biased region" description="Basic residues" evidence="3">
    <location>
        <begin position="559"/>
        <end position="570"/>
    </location>
</feature>
<feature type="modified residue" description="Phosphoserine" evidence="1">
    <location>
        <position position="30"/>
    </location>
</feature>
<feature type="modified residue" description="Phosphoserine" evidence="7">
    <location>
        <position position="32"/>
    </location>
</feature>
<feature type="modified residue" description="Phosphothreonine" evidence="7">
    <location>
        <position position="228"/>
    </location>
</feature>
<feature type="modified residue" description="Phosphoserine" evidence="7">
    <location>
        <position position="230"/>
    </location>
</feature>
<feature type="modified residue" description="Phosphothreonine" evidence="1">
    <location>
        <position position="361"/>
    </location>
</feature>
<feature type="modified residue" description="Phosphoserine" evidence="1">
    <location>
        <position position="365"/>
    </location>
</feature>
<feature type="modified residue" description="Phosphothreonine" evidence="7">
    <location>
        <position position="479"/>
    </location>
</feature>
<feature type="modified residue" description="Phosphoserine" evidence="7">
    <location>
        <position position="542"/>
    </location>
</feature>
<feature type="modified residue" description="Phosphoserine" evidence="7">
    <location>
        <position position="571"/>
    </location>
</feature>
<feature type="modified residue" description="Phosphoserine" evidence="1">
    <location>
        <position position="619"/>
    </location>
</feature>
<feature type="splice variant" id="VSP_019989" description="In isoform 3." evidence="4">
    <location>
        <begin position="1"/>
        <end position="525"/>
    </location>
</feature>
<feature type="splice variant" id="VSP_019990" description="In isoform 2." evidence="5">
    <location>
        <begin position="28"/>
        <end position="444"/>
    </location>
</feature>
<protein>
    <recommendedName>
        <fullName>DENN domain-containing protein 2B</fullName>
    </recommendedName>
    <alternativeName>
        <fullName>HeLa tumor suppression 1</fullName>
    </alternativeName>
    <alternativeName>
        <fullName>Suppression of tumorigenicity 5 protein</fullName>
    </alternativeName>
</protein>
<gene>
    <name type="primary">Dennd2b</name>
    <name evidence="6" type="synonym">Denn2b</name>
    <name type="synonym">St5</name>
</gene>
<comment type="function">
    <molecule>Isoform 1</molecule>
    <text evidence="1">May be involved in cytoskeletal organization and tumorogenicity. Seems to be involved in a signaling transduction pathway leading to activation of MAPK1/ERK2. Plays a role in EGFR trafficking from recycling endosomes back to the cell membrane.</text>
</comment>
<comment type="function">
    <molecule>Isoform 2</molecule>
    <text evidence="1">Guanine nucleotide exchange factor (GEF) which may activate RAB9A and RAB9B. Promotes the exchange of GDP to GTP, converting inactive GDP-bound Rab proteins into their active GTP-bound form.</text>
</comment>
<comment type="function">
    <molecule>Isoform 3</molecule>
    <text evidence="1">May block ERK2 activation stimulated by ABL1. May alter cell morphology and cell growth.</text>
</comment>
<comment type="subunit">
    <text evidence="1">Interacts with ITSN1 and GRB2. Isoform 1 interacts with the SH3 domain of ABL1.</text>
</comment>
<comment type="subcellular location">
    <subcellularLocation>
        <location evidence="1">Cytoplasm</location>
        <location evidence="1">Cell cortex</location>
    </subcellularLocation>
    <subcellularLocation>
        <location evidence="1">Cell membrane</location>
    </subcellularLocation>
    <subcellularLocation>
        <location evidence="1">Recycling endosome</location>
    </subcellularLocation>
    <text evidence="1">Colocalizes with RAB13 and ITSN1 at cytoplasmic vesicles that are most likely recycling endosomes. Colocalizes with the cortical actin cytoskeleton.</text>
</comment>
<comment type="alternative products">
    <event type="alternative promoter"/>
    <event type="alternative splicing"/>
    <isoform>
        <id>Q924W7-1</id>
        <name>1</name>
        <sequence type="displayed"/>
    </isoform>
    <isoform>
        <id>Q924W7-2</id>
        <name>2</name>
        <sequence type="described" ref="VSP_019990"/>
    </isoform>
    <isoform>
        <id>Q924W7-3</id>
        <name>3</name>
        <sequence type="described" ref="VSP_019989"/>
    </isoform>
</comment>
<comment type="PTM">
    <text evidence="1">Phosphorylated. Phosphorylation decreases ITSN1 binding.</text>
</comment>
<comment type="miscellaneous">
    <molecule>Isoform 1</molecule>
    <text>May be produced by alternative promoter usage. Alternative promoter usage has been proven in human.</text>
</comment>
<comment type="miscellaneous">
    <molecule>Isoform 2</molecule>
    <text evidence="5">Produced by alternative splicing of isoform 1.</text>
</comment>
<comment type="miscellaneous">
    <molecule>Isoform 3</molecule>
    <text evidence="5">May be produced by alternative promoter usage. Alternative promoter usage has been proven in human.</text>
</comment>
<comment type="sequence caution" evidence="5">
    <conflict type="erroneous initiation">
        <sequence resource="EMBL-CDS" id="AAH32266"/>
    </conflict>
</comment>
<name>DEN2B_MOUSE</name>
<reference key="1">
    <citation type="journal article" date="2001" name="Cytogenet. Cell Genet.">
        <title>Comparative genomic sequencing reveals a strikingly similar architecture of a conserved syntenic region on human chromosome 11p15.3 (including gene ST5) and mouse chromosome 7.</title>
        <authorList>
            <person name="Amid C."/>
            <person name="Bahr A."/>
            <person name="Mujica A."/>
            <person name="Sampson N."/>
            <person name="Bikar S.E."/>
            <person name="Winterpacht A."/>
            <person name="Zabel B."/>
            <person name="Hankeln T."/>
            <person name="Schmidt E.R."/>
        </authorList>
    </citation>
    <scope>NUCLEOTIDE SEQUENCE [GENOMIC DNA]</scope>
    <scope>ALTERNATIVE SPLICING (ISOFORM 2)</scope>
</reference>
<reference key="2">
    <citation type="journal article" date="2004" name="Genome Res.">
        <title>The status, quality, and expansion of the NIH full-length cDNA project: the Mammalian Gene Collection (MGC).</title>
        <authorList>
            <consortium name="The MGC Project Team"/>
        </authorList>
    </citation>
    <scope>NUCLEOTIDE SEQUENCE [LARGE SCALE MRNA] (ISOFORMS 1 AND 3)</scope>
    <source>
        <strain>FVB/N</strain>
        <tissue>Colon</tissue>
        <tissue>Mammary tumor</tissue>
    </source>
</reference>
<reference key="3">
    <citation type="journal article" date="2010" name="Cell">
        <title>A tissue-specific atlas of mouse protein phosphorylation and expression.</title>
        <authorList>
            <person name="Huttlin E.L."/>
            <person name="Jedrychowski M.P."/>
            <person name="Elias J.E."/>
            <person name="Goswami T."/>
            <person name="Rad R."/>
            <person name="Beausoleil S.A."/>
            <person name="Villen J."/>
            <person name="Haas W."/>
            <person name="Sowa M.E."/>
            <person name="Gygi S.P."/>
        </authorList>
    </citation>
    <scope>PHOSPHORYLATION [LARGE SCALE ANALYSIS] AT SER-32; THR-228; SER-230; THR-479; SER-542 AND SER-571</scope>
    <scope>IDENTIFICATION BY MASS SPECTROMETRY [LARGE SCALE ANALYSIS]</scope>
    <source>
        <tissue>Kidney</tissue>
        <tissue>Liver</tissue>
        <tissue>Lung</tissue>
        <tissue>Spleen</tissue>
    </source>
</reference>
<accession>Q924W7</accession>
<accession>Q05BD9</accession>
<accession>Q78H54</accession>
<accession>Q8K2P3</accession>
<accession>Q924W8</accession>
<evidence type="ECO:0000250" key="1">
    <source>
        <dbReference type="UniProtKB" id="P78524"/>
    </source>
</evidence>
<evidence type="ECO:0000255" key="2">
    <source>
        <dbReference type="PROSITE-ProRule" id="PRU00304"/>
    </source>
</evidence>
<evidence type="ECO:0000256" key="3">
    <source>
        <dbReference type="SAM" id="MobiDB-lite"/>
    </source>
</evidence>
<evidence type="ECO:0000303" key="4">
    <source>
    </source>
</evidence>
<evidence type="ECO:0000305" key="5"/>
<evidence type="ECO:0000312" key="6">
    <source>
        <dbReference type="MGI" id="MGI:108517"/>
    </source>
</evidence>
<evidence type="ECO:0007744" key="7">
    <source>
    </source>
</evidence>
<sequence length="1134" mass="126861">MTMTANKNSSITHGTGGTKAPRETLSRSQSVSPPPVLYPPRSPIYPLSDSETSACRYPSHSKSQVLLKDRHSRNPSLLGQDPSPETSPPICTLKATSFSYLDRTPSLRKREDQKETVQGAVQDVEGVAACLPLAQSTPFLGAGSRSVLLSCTGTRAHSLGIREKISAWEGRREASPRMSLCGEKREGPGSEWSVSEGCPSVGCPSVVPSPCSSEKTFDFKGLRRMSRTFSECSYPETEEEAEALPGRDSLYRLEKRPGRTEPSALLRGHGIRKESSAVLSRIQKIEQALKEQPGRGLPQLPSSCYSVDQGRRKTGTLGTLEEPTGTASVSPSSRAGGVAGVAGEAGPPLDREGSASMKSETPGNSSSPQLLPPKSSPDPAVNPVPKPKRTFEYEADKNPKTKPSNGLPPSPTPAAPPPLPSTPAPPVTRRPKKDMRGHRKSQNRKSFEFEDASSLQSLYPSSPTENGTESQPKFGSKSTLEENAYEDIVGGLPKENPYEDVDLKNRRAGRKSQQLSENSLDSLHRMWSPQDRKYNHPPMQLSLKSNSQSLRSGNWSERKSHRLPRLPKRHSHDDMMLLAQLSLPSSPSSLNEDSLSTTSELLSSRRSRRIPKLVQRINSIYNAKRGKKRLKKLSMSSLETASLRDENSESESDSDDRFKAHTQRLVHIQSMLKRAPSYRTLELELLEWQERELFEYFVVVSLKKKPSRNTYLPEVSYQFPKLDRPTKQMREAEERLKAIPQFCFPDAKDWLPVSEYSSETFSFMLTGEDGSRRFGYCRRLLPSGKGPRLPEVYCVISRLGCFGLFSKVLDEVERRRGISAALVYPFMRSLMESPFPAPGKTIKVKTFLPGAGNEVLELRRPMDSRLEHVDFECLFTCLSVRQLIRIFASLLLERRVIFVADKLSTLSSCSHAVVALLYPFSWQHTFIPVLPASMIDIVCCPTPFLVGLLSSSLPKLKELPVEEALMVNLGSDRFIRQMDDEDTLLPRKLQAALEQALERKSELISQDSDSDSDDECNTLNGLVSEVFIRFFVETVGHYSLFLTHSEKGERAFQREAFRKSVASKSIRRFLEVFMESQMFAGFIQDRELRKCRAKGLFEQRVEQYLEELPDTEQSGMNKFLRGLGNKMKFLHKKN</sequence>
<keyword id="KW-0877">Alternative promoter usage</keyword>
<keyword id="KW-0025">Alternative splicing</keyword>
<keyword id="KW-1003">Cell membrane</keyword>
<keyword id="KW-0963">Cytoplasm</keyword>
<keyword id="KW-0967">Endosome</keyword>
<keyword id="KW-0344">Guanine-nucleotide releasing factor</keyword>
<keyword id="KW-0472">Membrane</keyword>
<keyword id="KW-0597">Phosphoprotein</keyword>
<keyword id="KW-1185">Reference proteome</keyword>